<protein>
    <recommendedName>
        <fullName evidence="1">Adenylate kinase</fullName>
        <shortName evidence="1">AK</shortName>
        <ecNumber evidence="1">2.7.4.3</ecNumber>
    </recommendedName>
    <alternativeName>
        <fullName evidence="1">ATP-AMP transphosphorylase</fullName>
    </alternativeName>
    <alternativeName>
        <fullName evidence="1">ATP:AMP phosphotransferase</fullName>
    </alternativeName>
    <alternativeName>
        <fullName evidence="1">Adenylate monophosphate kinase</fullName>
    </alternativeName>
</protein>
<evidence type="ECO:0000255" key="1">
    <source>
        <dbReference type="HAMAP-Rule" id="MF_00235"/>
    </source>
</evidence>
<proteinExistence type="inferred from homology"/>
<comment type="function">
    <text evidence="1">Catalyzes the reversible transfer of the terminal phosphate group between ATP and AMP. Plays an important role in cellular energy homeostasis and in adenine nucleotide metabolism.</text>
</comment>
<comment type="catalytic activity">
    <reaction evidence="1">
        <text>AMP + ATP = 2 ADP</text>
        <dbReference type="Rhea" id="RHEA:12973"/>
        <dbReference type="ChEBI" id="CHEBI:30616"/>
        <dbReference type="ChEBI" id="CHEBI:456215"/>
        <dbReference type="ChEBI" id="CHEBI:456216"/>
        <dbReference type="EC" id="2.7.4.3"/>
    </reaction>
</comment>
<comment type="pathway">
    <text evidence="1">Purine metabolism; AMP biosynthesis via salvage pathway; AMP from ADP: step 1/1.</text>
</comment>
<comment type="subunit">
    <text evidence="1">Monomer.</text>
</comment>
<comment type="subcellular location">
    <subcellularLocation>
        <location evidence="1">Cytoplasm</location>
    </subcellularLocation>
</comment>
<comment type="domain">
    <text evidence="1">Consists of three domains, a large central CORE domain and two small peripheral domains, NMPbind and LID, which undergo movements during catalysis. The LID domain closes over the site of phosphoryl transfer upon ATP binding. Assembling and dissambling the active center during each catalytic cycle provides an effective means to prevent ATP hydrolysis.</text>
</comment>
<comment type="similarity">
    <text evidence="1">Belongs to the adenylate kinase family.</text>
</comment>
<gene>
    <name evidence="1" type="primary">adk</name>
    <name type="ordered locus">LIC_12852</name>
</gene>
<organism>
    <name type="scientific">Leptospira interrogans serogroup Icterohaemorrhagiae serovar copenhageni (strain Fiocruz L1-130)</name>
    <dbReference type="NCBI Taxonomy" id="267671"/>
    <lineage>
        <taxon>Bacteria</taxon>
        <taxon>Pseudomonadati</taxon>
        <taxon>Spirochaetota</taxon>
        <taxon>Spirochaetia</taxon>
        <taxon>Leptospirales</taxon>
        <taxon>Leptospiraceae</taxon>
        <taxon>Leptospira</taxon>
    </lineage>
</organism>
<sequence length="187" mass="20594">MKNIIFMGPPGAGKGTQAKILCERLSIPQISTGDILREAVKNQTAMGIEAKRYMDAGDLVPDSVVIGIIKDRIREADCKNGFLLDGFPRTVEQAEALDTLLKNEGKSIDKAINLQVPDAELLKRLLGRAEIEGRADDNEVTIKNRLDNYNKKTLPLLDFYATRKKLSQVNGVGSLEEVTSLIQKELA</sequence>
<reference key="1">
    <citation type="journal article" date="2004" name="J. Bacteriol.">
        <title>Comparative genomics of two Leptospira interrogans serovars reveals novel insights into physiology and pathogenesis.</title>
        <authorList>
            <person name="Nascimento A.L.T.O."/>
            <person name="Ko A.I."/>
            <person name="Martins E.A.L."/>
            <person name="Monteiro-Vitorello C.B."/>
            <person name="Ho P.L."/>
            <person name="Haake D.A."/>
            <person name="Verjovski-Almeida S."/>
            <person name="Hartskeerl R.A."/>
            <person name="Marques M.V."/>
            <person name="Oliveira M.C."/>
            <person name="Menck C.F.M."/>
            <person name="Leite L.C.C."/>
            <person name="Carrer H."/>
            <person name="Coutinho L.L."/>
            <person name="Degrave W.M."/>
            <person name="Dellagostin O.A."/>
            <person name="El-Dorry H."/>
            <person name="Ferro E.S."/>
            <person name="Ferro M.I.T."/>
            <person name="Furlan L.R."/>
            <person name="Gamberini M."/>
            <person name="Giglioti E.A."/>
            <person name="Goes-Neto A."/>
            <person name="Goldman G.H."/>
            <person name="Goldman M.H.S."/>
            <person name="Harakava R."/>
            <person name="Jeronimo S.M.B."/>
            <person name="Junqueira-de-Azevedo I.L.M."/>
            <person name="Kimura E.T."/>
            <person name="Kuramae E.E."/>
            <person name="Lemos E.G.M."/>
            <person name="Lemos M.V.F."/>
            <person name="Marino C.L."/>
            <person name="Nunes L.R."/>
            <person name="de Oliveira R.C."/>
            <person name="Pereira G.G."/>
            <person name="Reis M.S."/>
            <person name="Schriefer A."/>
            <person name="Siqueira W.J."/>
            <person name="Sommer P."/>
            <person name="Tsai S.M."/>
            <person name="Simpson A.J.G."/>
            <person name="Ferro J.A."/>
            <person name="Camargo L.E.A."/>
            <person name="Kitajima J.P."/>
            <person name="Setubal J.C."/>
            <person name="Van Sluys M.A."/>
        </authorList>
    </citation>
    <scope>NUCLEOTIDE SEQUENCE [LARGE SCALE GENOMIC DNA]</scope>
    <source>
        <strain>Fiocruz L1-130</strain>
    </source>
</reference>
<feature type="chain" id="PRO_0000158785" description="Adenylate kinase">
    <location>
        <begin position="1"/>
        <end position="187"/>
    </location>
</feature>
<feature type="region of interest" description="NMP" evidence="1">
    <location>
        <begin position="31"/>
        <end position="60"/>
    </location>
</feature>
<feature type="region of interest" description="LID" evidence="1">
    <location>
        <begin position="127"/>
        <end position="137"/>
    </location>
</feature>
<feature type="binding site" evidence="1">
    <location>
        <begin position="11"/>
        <end position="16"/>
    </location>
    <ligand>
        <name>ATP</name>
        <dbReference type="ChEBI" id="CHEBI:30616"/>
    </ligand>
</feature>
<feature type="binding site" evidence="1">
    <location>
        <position position="32"/>
    </location>
    <ligand>
        <name>AMP</name>
        <dbReference type="ChEBI" id="CHEBI:456215"/>
    </ligand>
</feature>
<feature type="binding site" evidence="1">
    <location>
        <position position="37"/>
    </location>
    <ligand>
        <name>AMP</name>
        <dbReference type="ChEBI" id="CHEBI:456215"/>
    </ligand>
</feature>
<feature type="binding site" evidence="1">
    <location>
        <begin position="58"/>
        <end position="60"/>
    </location>
    <ligand>
        <name>AMP</name>
        <dbReference type="ChEBI" id="CHEBI:456215"/>
    </ligand>
</feature>
<feature type="binding site" evidence="1">
    <location>
        <begin position="86"/>
        <end position="89"/>
    </location>
    <ligand>
        <name>AMP</name>
        <dbReference type="ChEBI" id="CHEBI:456215"/>
    </ligand>
</feature>
<feature type="binding site" evidence="1">
    <location>
        <position position="93"/>
    </location>
    <ligand>
        <name>AMP</name>
        <dbReference type="ChEBI" id="CHEBI:456215"/>
    </ligand>
</feature>
<feature type="binding site" evidence="1">
    <location>
        <position position="128"/>
    </location>
    <ligand>
        <name>ATP</name>
        <dbReference type="ChEBI" id="CHEBI:30616"/>
    </ligand>
</feature>
<feature type="binding site" evidence="1">
    <location>
        <position position="134"/>
    </location>
    <ligand>
        <name>AMP</name>
        <dbReference type="ChEBI" id="CHEBI:456215"/>
    </ligand>
</feature>
<feature type="binding site" evidence="1">
    <location>
        <position position="145"/>
    </location>
    <ligand>
        <name>AMP</name>
        <dbReference type="ChEBI" id="CHEBI:456215"/>
    </ligand>
</feature>
<feature type="binding site" evidence="1">
    <location>
        <position position="173"/>
    </location>
    <ligand>
        <name>ATP</name>
        <dbReference type="ChEBI" id="CHEBI:30616"/>
    </ligand>
</feature>
<accession>Q72NI2</accession>
<keyword id="KW-0067">ATP-binding</keyword>
<keyword id="KW-0963">Cytoplasm</keyword>
<keyword id="KW-0418">Kinase</keyword>
<keyword id="KW-0545">Nucleotide biosynthesis</keyword>
<keyword id="KW-0547">Nucleotide-binding</keyword>
<keyword id="KW-0808">Transferase</keyword>
<name>KAD_LEPIC</name>
<dbReference type="EC" id="2.7.4.3" evidence="1"/>
<dbReference type="EMBL" id="AE016823">
    <property type="protein sequence ID" value="AAS71405.1"/>
    <property type="molecule type" value="Genomic_DNA"/>
</dbReference>
<dbReference type="RefSeq" id="WP_000789400.1">
    <property type="nucleotide sequence ID" value="NC_005823.1"/>
</dbReference>
<dbReference type="SMR" id="Q72NI2"/>
<dbReference type="KEGG" id="lic:LIC_12852"/>
<dbReference type="HOGENOM" id="CLU_032354_4_1_12"/>
<dbReference type="UniPathway" id="UPA00588">
    <property type="reaction ID" value="UER00649"/>
</dbReference>
<dbReference type="Proteomes" id="UP000007037">
    <property type="component" value="Chromosome I"/>
</dbReference>
<dbReference type="GO" id="GO:0005737">
    <property type="term" value="C:cytoplasm"/>
    <property type="evidence" value="ECO:0007669"/>
    <property type="project" value="UniProtKB-SubCell"/>
</dbReference>
<dbReference type="GO" id="GO:0004017">
    <property type="term" value="F:adenylate kinase activity"/>
    <property type="evidence" value="ECO:0007669"/>
    <property type="project" value="UniProtKB-UniRule"/>
</dbReference>
<dbReference type="GO" id="GO:0005524">
    <property type="term" value="F:ATP binding"/>
    <property type="evidence" value="ECO:0007669"/>
    <property type="project" value="UniProtKB-UniRule"/>
</dbReference>
<dbReference type="GO" id="GO:0044209">
    <property type="term" value="P:AMP salvage"/>
    <property type="evidence" value="ECO:0007669"/>
    <property type="project" value="UniProtKB-UniRule"/>
</dbReference>
<dbReference type="CDD" id="cd01428">
    <property type="entry name" value="ADK"/>
    <property type="match status" value="1"/>
</dbReference>
<dbReference type="Gene3D" id="3.40.50.300">
    <property type="entry name" value="P-loop containing nucleotide triphosphate hydrolases"/>
    <property type="match status" value="1"/>
</dbReference>
<dbReference type="HAMAP" id="MF_00235">
    <property type="entry name" value="Adenylate_kinase_Adk"/>
    <property type="match status" value="1"/>
</dbReference>
<dbReference type="InterPro" id="IPR006259">
    <property type="entry name" value="Adenyl_kin_sub"/>
</dbReference>
<dbReference type="InterPro" id="IPR000850">
    <property type="entry name" value="Adenylat/UMP-CMP_kin"/>
</dbReference>
<dbReference type="InterPro" id="IPR033690">
    <property type="entry name" value="Adenylat_kinase_CS"/>
</dbReference>
<dbReference type="InterPro" id="IPR027417">
    <property type="entry name" value="P-loop_NTPase"/>
</dbReference>
<dbReference type="NCBIfam" id="TIGR01351">
    <property type="entry name" value="adk"/>
    <property type="match status" value="1"/>
</dbReference>
<dbReference type="NCBIfam" id="NF001381">
    <property type="entry name" value="PRK00279.1-3"/>
    <property type="match status" value="1"/>
</dbReference>
<dbReference type="NCBIfam" id="NF011100">
    <property type="entry name" value="PRK14527.1"/>
    <property type="match status" value="1"/>
</dbReference>
<dbReference type="NCBIfam" id="NF011101">
    <property type="entry name" value="PRK14528.1"/>
    <property type="match status" value="1"/>
</dbReference>
<dbReference type="NCBIfam" id="NF011104">
    <property type="entry name" value="PRK14531.1"/>
    <property type="match status" value="1"/>
</dbReference>
<dbReference type="NCBIfam" id="NF011105">
    <property type="entry name" value="PRK14532.1"/>
    <property type="match status" value="1"/>
</dbReference>
<dbReference type="PANTHER" id="PTHR23359">
    <property type="entry name" value="NUCLEOTIDE KINASE"/>
    <property type="match status" value="1"/>
</dbReference>
<dbReference type="Pfam" id="PF00406">
    <property type="entry name" value="ADK"/>
    <property type="match status" value="1"/>
</dbReference>
<dbReference type="PRINTS" id="PR00094">
    <property type="entry name" value="ADENYLTKNASE"/>
</dbReference>
<dbReference type="SUPFAM" id="SSF52540">
    <property type="entry name" value="P-loop containing nucleoside triphosphate hydrolases"/>
    <property type="match status" value="1"/>
</dbReference>
<dbReference type="PROSITE" id="PS00113">
    <property type="entry name" value="ADENYLATE_KINASE"/>
    <property type="match status" value="1"/>
</dbReference>